<name>RS7_STAEQ</name>
<sequence length="156" mass="17795">MPRKGSVPKRDVLPDPIHNSKLVTKLINKIMLDGKRGTAQRILYSAFDLVEQRSGRDALEVFEEAINNIMPVLEVKARRVGGSNYQVPVEVRPERRTTLGLRWLVNYARLRGEKTMEDRLANEILDAANNTGGAVKKREDTHKMAEANKAFAHYRW</sequence>
<proteinExistence type="inferred from homology"/>
<dbReference type="EMBL" id="CP000029">
    <property type="protein sequence ID" value="AAW53592.1"/>
    <property type="molecule type" value="Genomic_DNA"/>
</dbReference>
<dbReference type="RefSeq" id="WP_001137495.1">
    <property type="nucleotide sequence ID" value="NC_002976.3"/>
</dbReference>
<dbReference type="SMR" id="Q5HRK6"/>
<dbReference type="STRING" id="176279.SERP0187"/>
<dbReference type="GeneID" id="98344880"/>
<dbReference type="KEGG" id="ser:SERP0187"/>
<dbReference type="eggNOG" id="COG0049">
    <property type="taxonomic scope" value="Bacteria"/>
</dbReference>
<dbReference type="HOGENOM" id="CLU_072226_1_1_9"/>
<dbReference type="Proteomes" id="UP000000531">
    <property type="component" value="Chromosome"/>
</dbReference>
<dbReference type="GO" id="GO:0015935">
    <property type="term" value="C:small ribosomal subunit"/>
    <property type="evidence" value="ECO:0007669"/>
    <property type="project" value="InterPro"/>
</dbReference>
<dbReference type="GO" id="GO:0019843">
    <property type="term" value="F:rRNA binding"/>
    <property type="evidence" value="ECO:0007669"/>
    <property type="project" value="UniProtKB-UniRule"/>
</dbReference>
<dbReference type="GO" id="GO:0003735">
    <property type="term" value="F:structural constituent of ribosome"/>
    <property type="evidence" value="ECO:0007669"/>
    <property type="project" value="InterPro"/>
</dbReference>
<dbReference type="GO" id="GO:0000049">
    <property type="term" value="F:tRNA binding"/>
    <property type="evidence" value="ECO:0007669"/>
    <property type="project" value="UniProtKB-UniRule"/>
</dbReference>
<dbReference type="GO" id="GO:0006412">
    <property type="term" value="P:translation"/>
    <property type="evidence" value="ECO:0007669"/>
    <property type="project" value="UniProtKB-UniRule"/>
</dbReference>
<dbReference type="CDD" id="cd14869">
    <property type="entry name" value="uS7_Bacteria"/>
    <property type="match status" value="1"/>
</dbReference>
<dbReference type="FunFam" id="1.10.455.10:FF:000001">
    <property type="entry name" value="30S ribosomal protein S7"/>
    <property type="match status" value="1"/>
</dbReference>
<dbReference type="Gene3D" id="1.10.455.10">
    <property type="entry name" value="Ribosomal protein S7 domain"/>
    <property type="match status" value="1"/>
</dbReference>
<dbReference type="HAMAP" id="MF_00480_B">
    <property type="entry name" value="Ribosomal_uS7_B"/>
    <property type="match status" value="1"/>
</dbReference>
<dbReference type="InterPro" id="IPR000235">
    <property type="entry name" value="Ribosomal_uS7"/>
</dbReference>
<dbReference type="InterPro" id="IPR005717">
    <property type="entry name" value="Ribosomal_uS7_bac/org-type"/>
</dbReference>
<dbReference type="InterPro" id="IPR020606">
    <property type="entry name" value="Ribosomal_uS7_CS"/>
</dbReference>
<dbReference type="InterPro" id="IPR023798">
    <property type="entry name" value="Ribosomal_uS7_dom"/>
</dbReference>
<dbReference type="InterPro" id="IPR036823">
    <property type="entry name" value="Ribosomal_uS7_dom_sf"/>
</dbReference>
<dbReference type="NCBIfam" id="TIGR01029">
    <property type="entry name" value="rpsG_bact"/>
    <property type="match status" value="1"/>
</dbReference>
<dbReference type="PANTHER" id="PTHR11205">
    <property type="entry name" value="RIBOSOMAL PROTEIN S7"/>
    <property type="match status" value="1"/>
</dbReference>
<dbReference type="Pfam" id="PF00177">
    <property type="entry name" value="Ribosomal_S7"/>
    <property type="match status" value="1"/>
</dbReference>
<dbReference type="PIRSF" id="PIRSF002122">
    <property type="entry name" value="RPS7p_RPS7a_RPS5e_RPS7o"/>
    <property type="match status" value="1"/>
</dbReference>
<dbReference type="SUPFAM" id="SSF47973">
    <property type="entry name" value="Ribosomal protein S7"/>
    <property type="match status" value="1"/>
</dbReference>
<dbReference type="PROSITE" id="PS00052">
    <property type="entry name" value="RIBOSOMAL_S7"/>
    <property type="match status" value="1"/>
</dbReference>
<gene>
    <name evidence="1" type="primary">rpsG</name>
    <name type="ordered locus">SERP0187</name>
</gene>
<evidence type="ECO:0000255" key="1">
    <source>
        <dbReference type="HAMAP-Rule" id="MF_00480"/>
    </source>
</evidence>
<evidence type="ECO:0000305" key="2"/>
<keyword id="KW-1185">Reference proteome</keyword>
<keyword id="KW-0687">Ribonucleoprotein</keyword>
<keyword id="KW-0689">Ribosomal protein</keyword>
<keyword id="KW-0694">RNA-binding</keyword>
<keyword id="KW-0699">rRNA-binding</keyword>
<keyword id="KW-0820">tRNA-binding</keyword>
<organism>
    <name type="scientific">Staphylococcus epidermidis (strain ATCC 35984 / DSM 28319 / BCRC 17069 / CCUG 31568 / BM 3577 / RP62A)</name>
    <dbReference type="NCBI Taxonomy" id="176279"/>
    <lineage>
        <taxon>Bacteria</taxon>
        <taxon>Bacillati</taxon>
        <taxon>Bacillota</taxon>
        <taxon>Bacilli</taxon>
        <taxon>Bacillales</taxon>
        <taxon>Staphylococcaceae</taxon>
        <taxon>Staphylococcus</taxon>
    </lineage>
</organism>
<protein>
    <recommendedName>
        <fullName evidence="1">Small ribosomal subunit protein uS7</fullName>
    </recommendedName>
    <alternativeName>
        <fullName evidence="2">30S ribosomal protein S7</fullName>
    </alternativeName>
</protein>
<feature type="chain" id="PRO_0000124348" description="Small ribosomal subunit protein uS7">
    <location>
        <begin position="1"/>
        <end position="156"/>
    </location>
</feature>
<accession>Q5HRK6</accession>
<comment type="function">
    <text evidence="1">One of the primary rRNA binding proteins, it binds directly to 16S rRNA where it nucleates assembly of the head domain of the 30S subunit. Is located at the subunit interface close to the decoding center, probably blocks exit of the E-site tRNA.</text>
</comment>
<comment type="subunit">
    <text evidence="1">Part of the 30S ribosomal subunit. Contacts proteins S9 and S11.</text>
</comment>
<comment type="similarity">
    <text evidence="1">Belongs to the universal ribosomal protein uS7 family.</text>
</comment>
<reference key="1">
    <citation type="journal article" date="2005" name="J. Bacteriol.">
        <title>Insights on evolution of virulence and resistance from the complete genome analysis of an early methicillin-resistant Staphylococcus aureus strain and a biofilm-producing methicillin-resistant Staphylococcus epidermidis strain.</title>
        <authorList>
            <person name="Gill S.R."/>
            <person name="Fouts D.E."/>
            <person name="Archer G.L."/>
            <person name="Mongodin E.F."/>
            <person name="DeBoy R.T."/>
            <person name="Ravel J."/>
            <person name="Paulsen I.T."/>
            <person name="Kolonay J.F."/>
            <person name="Brinkac L.M."/>
            <person name="Beanan M.J."/>
            <person name="Dodson R.J."/>
            <person name="Daugherty S.C."/>
            <person name="Madupu R."/>
            <person name="Angiuoli S.V."/>
            <person name="Durkin A.S."/>
            <person name="Haft D.H."/>
            <person name="Vamathevan J.J."/>
            <person name="Khouri H."/>
            <person name="Utterback T.R."/>
            <person name="Lee C."/>
            <person name="Dimitrov G."/>
            <person name="Jiang L."/>
            <person name="Qin H."/>
            <person name="Weidman J."/>
            <person name="Tran K."/>
            <person name="Kang K.H."/>
            <person name="Hance I.R."/>
            <person name="Nelson K.E."/>
            <person name="Fraser C.M."/>
        </authorList>
    </citation>
    <scope>NUCLEOTIDE SEQUENCE [LARGE SCALE GENOMIC DNA]</scope>
    <source>
        <strain>ATCC 35984 / DSM 28319 / BCRC 17069 / CCUG 31568 / BM 3577 / RP62A</strain>
    </source>
</reference>